<keyword id="KW-0002">3D-structure</keyword>
<keyword id="KW-0067">ATP-binding</keyword>
<keyword id="KW-0963">Cytoplasm</keyword>
<keyword id="KW-0418">Kinase</keyword>
<keyword id="KW-0520">NAD</keyword>
<keyword id="KW-0521">NADP</keyword>
<keyword id="KW-0547">Nucleotide-binding</keyword>
<keyword id="KW-1185">Reference proteome</keyword>
<keyword id="KW-0808">Transferase</keyword>
<evidence type="ECO:0000250" key="1"/>
<evidence type="ECO:0000255" key="2">
    <source>
        <dbReference type="HAMAP-Rule" id="MF_00361"/>
    </source>
</evidence>
<evidence type="ECO:0000269" key="3">
    <source>
    </source>
</evidence>
<evidence type="ECO:0000269" key="4">
    <source ref="3"/>
</evidence>
<evidence type="ECO:0007829" key="5">
    <source>
        <dbReference type="PDB" id="2AN1"/>
    </source>
</evidence>
<proteinExistence type="evidence at protein level"/>
<protein>
    <recommendedName>
        <fullName evidence="2">NAD kinase</fullName>
        <ecNumber evidence="2">2.7.1.23</ecNumber>
    </recommendedName>
    <alternativeName>
        <fullName evidence="2">ATP-dependent NAD kinase</fullName>
    </alternativeName>
</protein>
<organism>
    <name type="scientific">Salmonella typhimurium (strain LT2 / SGSC1412 / ATCC 700720)</name>
    <dbReference type="NCBI Taxonomy" id="99287"/>
    <lineage>
        <taxon>Bacteria</taxon>
        <taxon>Pseudomonadati</taxon>
        <taxon>Pseudomonadota</taxon>
        <taxon>Gammaproteobacteria</taxon>
        <taxon>Enterobacterales</taxon>
        <taxon>Enterobacteriaceae</taxon>
        <taxon>Salmonella</taxon>
    </lineage>
</organism>
<feature type="chain" id="PRO_0000120655" description="NAD kinase">
    <location>
        <begin position="1"/>
        <end position="292"/>
    </location>
</feature>
<feature type="active site" description="Proton acceptor" evidence="2">
    <location>
        <position position="73"/>
    </location>
</feature>
<feature type="binding site" evidence="2">
    <location>
        <begin position="73"/>
        <end position="74"/>
    </location>
    <ligand>
        <name>NAD(+)</name>
        <dbReference type="ChEBI" id="CHEBI:57540"/>
    </ligand>
</feature>
<feature type="binding site" evidence="2">
    <location>
        <begin position="147"/>
        <end position="148"/>
    </location>
    <ligand>
        <name>NAD(+)</name>
        <dbReference type="ChEBI" id="CHEBI:57540"/>
    </ligand>
</feature>
<feature type="binding site" evidence="2">
    <location>
        <position position="158"/>
    </location>
    <ligand>
        <name>NAD(+)</name>
        <dbReference type="ChEBI" id="CHEBI:57540"/>
    </ligand>
</feature>
<feature type="binding site" evidence="2">
    <location>
        <position position="175"/>
    </location>
    <ligand>
        <name>NAD(+)</name>
        <dbReference type="ChEBI" id="CHEBI:57540"/>
    </ligand>
</feature>
<feature type="binding site" evidence="2">
    <location>
        <position position="177"/>
    </location>
    <ligand>
        <name>NAD(+)</name>
        <dbReference type="ChEBI" id="CHEBI:57540"/>
    </ligand>
</feature>
<feature type="binding site" evidence="2">
    <location>
        <position position="185"/>
    </location>
    <ligand>
        <name>NAD(+)</name>
        <dbReference type="ChEBI" id="CHEBI:57540"/>
    </ligand>
</feature>
<feature type="binding site" evidence="2">
    <location>
        <begin position="188"/>
        <end position="193"/>
    </location>
    <ligand>
        <name>NAD(+)</name>
        <dbReference type="ChEBI" id="CHEBI:57540"/>
    </ligand>
</feature>
<feature type="binding site" evidence="2">
    <location>
        <position position="247"/>
    </location>
    <ligand>
        <name>NAD(+)</name>
        <dbReference type="ChEBI" id="CHEBI:57540"/>
    </ligand>
</feature>
<feature type="site" description="Responsible for conferring strict specificity to NAD" evidence="1">
    <location>
        <position position="175"/>
    </location>
</feature>
<feature type="strand" evidence="5">
    <location>
        <begin position="7"/>
        <end position="11"/>
    </location>
</feature>
<feature type="helix" evidence="5">
    <location>
        <begin position="22"/>
        <end position="32"/>
    </location>
</feature>
<feature type="strand" evidence="5">
    <location>
        <begin position="36"/>
        <end position="40"/>
    </location>
</feature>
<feature type="helix" evidence="5">
    <location>
        <begin position="41"/>
        <end position="46"/>
    </location>
</feature>
<feature type="helix" evidence="5">
    <location>
        <begin position="57"/>
        <end position="63"/>
    </location>
</feature>
<feature type="strand" evidence="5">
    <location>
        <begin position="65"/>
        <end position="69"/>
    </location>
</feature>
<feature type="helix" evidence="5">
    <location>
        <begin position="73"/>
        <end position="83"/>
    </location>
</feature>
<feature type="strand" evidence="5">
    <location>
        <begin position="89"/>
        <end position="93"/>
    </location>
</feature>
<feature type="strand" evidence="5">
    <location>
        <begin position="95"/>
        <end position="97"/>
    </location>
</feature>
<feature type="helix" evidence="5">
    <location>
        <begin position="109"/>
        <end position="117"/>
    </location>
</feature>
<feature type="strand" evidence="5">
    <location>
        <begin position="121"/>
        <end position="134"/>
    </location>
</feature>
<feature type="strand" evidence="5">
    <location>
        <begin position="138"/>
        <end position="140"/>
    </location>
</feature>
<feature type="strand" evidence="5">
    <location>
        <begin position="142"/>
        <end position="155"/>
    </location>
</feature>
<feature type="strand" evidence="5">
    <location>
        <begin position="160"/>
        <end position="166"/>
    </location>
</feature>
<feature type="strand" evidence="5">
    <location>
        <begin position="169"/>
        <end position="182"/>
    </location>
</feature>
<feature type="helix" evidence="5">
    <location>
        <begin position="185"/>
        <end position="188"/>
    </location>
</feature>
<feature type="helix" evidence="5">
    <location>
        <begin position="190"/>
        <end position="193"/>
    </location>
</feature>
<feature type="strand" evidence="5">
    <location>
        <begin position="204"/>
        <end position="212"/>
    </location>
</feature>
<feature type="strand" evidence="5">
    <location>
        <begin position="221"/>
        <end position="224"/>
    </location>
</feature>
<feature type="strand" evidence="5">
    <location>
        <begin position="229"/>
        <end position="233"/>
    </location>
</feature>
<feature type="strand" evidence="5">
    <location>
        <begin position="240"/>
        <end position="244"/>
    </location>
</feature>
<feature type="strand" evidence="5">
    <location>
        <begin position="250"/>
        <end position="252"/>
    </location>
</feature>
<feature type="strand" evidence="5">
    <location>
        <begin position="257"/>
        <end position="272"/>
    </location>
</feature>
<feature type="helix" evidence="5">
    <location>
        <begin position="277"/>
        <end position="285"/>
    </location>
</feature>
<comment type="function">
    <text evidence="2 3">Involved in the regulation of the intracellular balance of NAD and NADP, and is a key enzyme in the biosynthesis of NADP. Catalyzes specifically the phosphorylation on 2'-hydroxyl of the adenosine moiety of NAD to yield NADP. It can use ATP and other nucleoside triphosphates as a source of phosphorus. NADH cannot replace NAD as a substrate.</text>
</comment>
<comment type="catalytic activity">
    <reaction evidence="2 3">
        <text>NAD(+) + ATP = ADP + NADP(+) + H(+)</text>
        <dbReference type="Rhea" id="RHEA:18629"/>
        <dbReference type="ChEBI" id="CHEBI:15378"/>
        <dbReference type="ChEBI" id="CHEBI:30616"/>
        <dbReference type="ChEBI" id="CHEBI:57540"/>
        <dbReference type="ChEBI" id="CHEBI:58349"/>
        <dbReference type="ChEBI" id="CHEBI:456216"/>
        <dbReference type="EC" id="2.7.1.23"/>
    </reaction>
</comment>
<comment type="cofactor">
    <cofactor evidence="2 3">
        <name>a divalent metal cation</name>
        <dbReference type="ChEBI" id="CHEBI:60240"/>
    </cofactor>
</comment>
<comment type="activity regulation">
    <text evidence="3">Allosterically inhibited by NADPH and NADH. NADPH is the primary inhibitor during aerobic growth and NADH during anaerobic growth.</text>
</comment>
<comment type="biophysicochemical properties">
    <kinetics>
        <KM evidence="3">2.1 mM for NAD</KM>
        <KM evidence="3">2.7 mM for ATP</KM>
    </kinetics>
</comment>
<comment type="subunit">
    <text evidence="3 4">Equilibrium mixture of dimer and tetramer. It is converted entirely to tetramer in the presence of the inhibitor NADPH.</text>
</comment>
<comment type="subcellular location">
    <subcellularLocation>
        <location evidence="2">Cytoplasm</location>
    </subcellularLocation>
</comment>
<comment type="similarity">
    <text evidence="2">Belongs to the NAD kinase family.</text>
</comment>
<accession>P65774</accession>
<accession>Q8XFN1</accession>
<name>NADK_SALTY</name>
<reference key="1">
    <citation type="journal article" date="2001" name="Nature">
        <title>Complete genome sequence of Salmonella enterica serovar Typhimurium LT2.</title>
        <authorList>
            <person name="McClelland M."/>
            <person name="Sanderson K.E."/>
            <person name="Spieth J."/>
            <person name="Clifton S.W."/>
            <person name="Latreille P."/>
            <person name="Courtney L."/>
            <person name="Porwollik S."/>
            <person name="Ali J."/>
            <person name="Dante M."/>
            <person name="Du F."/>
            <person name="Hou S."/>
            <person name="Layman D."/>
            <person name="Leonard S."/>
            <person name="Nguyen C."/>
            <person name="Scott K."/>
            <person name="Holmes A."/>
            <person name="Grewal N."/>
            <person name="Mulvaney E."/>
            <person name="Ryan E."/>
            <person name="Sun H."/>
            <person name="Florea L."/>
            <person name="Miller W."/>
            <person name="Stoneking T."/>
            <person name="Nhan M."/>
            <person name="Waterston R."/>
            <person name="Wilson R.K."/>
        </authorList>
    </citation>
    <scope>NUCLEOTIDE SEQUENCE [LARGE SCALE GENOMIC DNA]</scope>
    <source>
        <strain>LT2 / SGSC1412 / ATCC 700720</strain>
    </source>
</reference>
<reference key="2">
    <citation type="journal article" date="2006" name="Proc. Natl. Acad. Sci. U.S.A.">
        <title>Evidence that feedback inhibition of NAD kinase controls responses to oxidative stress.</title>
        <authorList>
            <person name="Grose J.H."/>
            <person name="Joss L."/>
            <person name="Velick S.F."/>
            <person name="Roth J.R."/>
        </authorList>
    </citation>
    <scope>FUNCTION</scope>
    <scope>CATALYTIC ACTIVITY</scope>
    <scope>BIOPHYSICOCHEMICAL PROPERTIES</scope>
    <scope>ACTIVITY REGULATION</scope>
    <scope>SUBSTRATE SPECIFICITY</scope>
    <scope>COFACTOR</scope>
    <scope>SUBUNIT</scope>
    <scope>NOMENCLATURE</scope>
</reference>
<reference key="3">
    <citation type="submission" date="2005-08" db="PDB data bank">
        <title>The crystal structure of a putative kinase from Salmonella typhimurim LT2.</title>
        <authorList>
            <consortium name="Midwest center for structural genomics (MCSG)"/>
        </authorList>
    </citation>
    <scope>X-RAY CRYSTALLOGRAPHY (2.0 ANGSTROMS)</scope>
    <scope>SUBUNIT</scope>
</reference>
<gene>
    <name evidence="2" type="primary">nadK</name>
    <name type="ordered locus">STM2683</name>
</gene>
<dbReference type="EC" id="2.7.1.23" evidence="2"/>
<dbReference type="EMBL" id="AE006468">
    <property type="protein sequence ID" value="AAL21572.1"/>
    <property type="molecule type" value="Genomic_DNA"/>
</dbReference>
<dbReference type="RefSeq" id="WP_001059155.1">
    <property type="nucleotide sequence ID" value="NC_003197.2"/>
</dbReference>
<dbReference type="PDB" id="2AN1">
    <property type="method" value="X-ray"/>
    <property type="resolution" value="2.00 A"/>
    <property type="chains" value="A/B/C/D=1-292"/>
</dbReference>
<dbReference type="PDBsum" id="2AN1"/>
<dbReference type="SMR" id="P65774"/>
<dbReference type="STRING" id="99287.STM2683"/>
<dbReference type="PaxDb" id="99287-STM2683"/>
<dbReference type="DNASU" id="1254206"/>
<dbReference type="KEGG" id="stm:STM2683"/>
<dbReference type="PATRIC" id="fig|99287.12.peg.2828"/>
<dbReference type="HOGENOM" id="CLU_008831_0_1_6"/>
<dbReference type="OMA" id="SMCHFEI"/>
<dbReference type="PhylomeDB" id="P65774"/>
<dbReference type="BioCyc" id="SENT99287:STM2683-MONOMER"/>
<dbReference type="SABIO-RK" id="P65774"/>
<dbReference type="EvolutionaryTrace" id="P65774"/>
<dbReference type="Proteomes" id="UP000001014">
    <property type="component" value="Chromosome"/>
</dbReference>
<dbReference type="GO" id="GO:0005737">
    <property type="term" value="C:cytoplasm"/>
    <property type="evidence" value="ECO:0007669"/>
    <property type="project" value="UniProtKB-SubCell"/>
</dbReference>
<dbReference type="GO" id="GO:0005524">
    <property type="term" value="F:ATP binding"/>
    <property type="evidence" value="ECO:0000314"/>
    <property type="project" value="UniProtKB"/>
</dbReference>
<dbReference type="GO" id="GO:0046872">
    <property type="term" value="F:metal ion binding"/>
    <property type="evidence" value="ECO:0007669"/>
    <property type="project" value="UniProtKB-UniRule"/>
</dbReference>
<dbReference type="GO" id="GO:0051287">
    <property type="term" value="F:NAD binding"/>
    <property type="evidence" value="ECO:0000314"/>
    <property type="project" value="UniProtKB"/>
</dbReference>
<dbReference type="GO" id="GO:0003951">
    <property type="term" value="F:NAD+ kinase activity"/>
    <property type="evidence" value="ECO:0000314"/>
    <property type="project" value="UniProtKB"/>
</dbReference>
<dbReference type="GO" id="GO:0019674">
    <property type="term" value="P:NAD metabolic process"/>
    <property type="evidence" value="ECO:0007669"/>
    <property type="project" value="InterPro"/>
</dbReference>
<dbReference type="GO" id="GO:0006741">
    <property type="term" value="P:NADP biosynthetic process"/>
    <property type="evidence" value="ECO:0000314"/>
    <property type="project" value="UniProtKB"/>
</dbReference>
<dbReference type="FunFam" id="2.60.200.30:FF:000001">
    <property type="entry name" value="NAD kinase"/>
    <property type="match status" value="1"/>
</dbReference>
<dbReference type="FunFam" id="3.40.50.10330:FF:000004">
    <property type="entry name" value="NAD kinase"/>
    <property type="match status" value="1"/>
</dbReference>
<dbReference type="Gene3D" id="3.40.50.10330">
    <property type="entry name" value="Probable inorganic polyphosphate/atp-NAD kinase, domain 1"/>
    <property type="match status" value="1"/>
</dbReference>
<dbReference type="Gene3D" id="2.60.200.30">
    <property type="entry name" value="Probable inorganic polyphosphate/atp-NAD kinase, domain 2"/>
    <property type="match status" value="1"/>
</dbReference>
<dbReference type="HAMAP" id="MF_00361">
    <property type="entry name" value="NAD_kinase"/>
    <property type="match status" value="1"/>
</dbReference>
<dbReference type="InterPro" id="IPR017438">
    <property type="entry name" value="ATP-NAD_kinase_N"/>
</dbReference>
<dbReference type="InterPro" id="IPR017437">
    <property type="entry name" value="ATP-NAD_kinase_PpnK-typ_C"/>
</dbReference>
<dbReference type="InterPro" id="IPR016064">
    <property type="entry name" value="NAD/diacylglycerol_kinase_sf"/>
</dbReference>
<dbReference type="InterPro" id="IPR002504">
    <property type="entry name" value="NADK"/>
</dbReference>
<dbReference type="NCBIfam" id="NF002306">
    <property type="entry name" value="PRK01231.1"/>
    <property type="match status" value="1"/>
</dbReference>
<dbReference type="NCBIfam" id="NF002893">
    <property type="entry name" value="PRK03378.1"/>
    <property type="match status" value="1"/>
</dbReference>
<dbReference type="PANTHER" id="PTHR20275">
    <property type="entry name" value="NAD KINASE"/>
    <property type="match status" value="1"/>
</dbReference>
<dbReference type="PANTHER" id="PTHR20275:SF0">
    <property type="entry name" value="NAD KINASE"/>
    <property type="match status" value="1"/>
</dbReference>
<dbReference type="Pfam" id="PF01513">
    <property type="entry name" value="NAD_kinase"/>
    <property type="match status" value="1"/>
</dbReference>
<dbReference type="Pfam" id="PF20143">
    <property type="entry name" value="NAD_kinase_C"/>
    <property type="match status" value="1"/>
</dbReference>
<dbReference type="SUPFAM" id="SSF111331">
    <property type="entry name" value="NAD kinase/diacylglycerol kinase-like"/>
    <property type="match status" value="1"/>
</dbReference>
<sequence length="292" mass="32584">MNNHFKCIGIVGHPRHPTALTTHEMLYRWLCDQGYEVIVEQQIAHELQLKNVPTGTLAEIGQQADLAVVVGGDGNMLGAARTLARYDINVIGINRGNLGFLTDLDPDNALQQLSDVLEGRYISEKRFLLEAQVCQQDRQKRISTAINEVVLHPGKVAHMIEFEVYIDETFAFSQRSDGLIISTPTGSTAYSLSAGGPILTPSLDAITLVPMFPHTLSARPLVINSSSTIRLRFSHRRSDLEISCDSQIALPIQEGEDVLIRRCDYHLNLIHPKDYSYFNTLSTKLGWSKKLF</sequence>